<proteinExistence type="inferred from homology"/>
<protein>
    <recommendedName>
        <fullName evidence="1">Phosphopantetheine adenylyltransferase</fullName>
        <ecNumber evidence="1">2.7.7.3</ecNumber>
    </recommendedName>
    <alternativeName>
        <fullName evidence="1">Dephospho-CoA pyrophosphorylase</fullName>
    </alternativeName>
    <alternativeName>
        <fullName evidence="1">Pantetheine-phosphate adenylyltransferase</fullName>
        <shortName evidence="1">PPAT</shortName>
    </alternativeName>
</protein>
<evidence type="ECO:0000255" key="1">
    <source>
        <dbReference type="HAMAP-Rule" id="MF_00151"/>
    </source>
</evidence>
<sequence>MQKRAIYPGTFDPITNGHIDIVTRATQMFDHVILAIAASPSKKPMFTLEERVELAQQATAHLGNVEVVGFSDLMANFARNQHATVLIRGLRAVADFEYEMQLAHMNRHLMPELESVFLMPSKEWSFISSSLVKEVARHQGDVTHFLPENVHQALMAKLA</sequence>
<dbReference type="EC" id="2.7.7.3" evidence="1"/>
<dbReference type="EMBL" id="CU928161">
    <property type="protein sequence ID" value="CAR05257.1"/>
    <property type="molecule type" value="Genomic_DNA"/>
</dbReference>
<dbReference type="RefSeq" id="WP_001171873.1">
    <property type="nucleotide sequence ID" value="NC_011742.1"/>
</dbReference>
<dbReference type="SMR" id="B7MFJ5"/>
<dbReference type="GeneID" id="75173828"/>
<dbReference type="KEGG" id="ecz:ECS88_4048"/>
<dbReference type="HOGENOM" id="CLU_100149_0_1_6"/>
<dbReference type="UniPathway" id="UPA00241">
    <property type="reaction ID" value="UER00355"/>
</dbReference>
<dbReference type="Proteomes" id="UP000000747">
    <property type="component" value="Chromosome"/>
</dbReference>
<dbReference type="GO" id="GO:0005737">
    <property type="term" value="C:cytoplasm"/>
    <property type="evidence" value="ECO:0007669"/>
    <property type="project" value="UniProtKB-SubCell"/>
</dbReference>
<dbReference type="GO" id="GO:0005524">
    <property type="term" value="F:ATP binding"/>
    <property type="evidence" value="ECO:0007669"/>
    <property type="project" value="UniProtKB-KW"/>
</dbReference>
<dbReference type="GO" id="GO:0004595">
    <property type="term" value="F:pantetheine-phosphate adenylyltransferase activity"/>
    <property type="evidence" value="ECO:0007669"/>
    <property type="project" value="UniProtKB-UniRule"/>
</dbReference>
<dbReference type="GO" id="GO:0015937">
    <property type="term" value="P:coenzyme A biosynthetic process"/>
    <property type="evidence" value="ECO:0007669"/>
    <property type="project" value="UniProtKB-UniRule"/>
</dbReference>
<dbReference type="CDD" id="cd02163">
    <property type="entry name" value="PPAT"/>
    <property type="match status" value="1"/>
</dbReference>
<dbReference type="FunFam" id="3.40.50.620:FF:000012">
    <property type="entry name" value="Phosphopantetheine adenylyltransferase"/>
    <property type="match status" value="1"/>
</dbReference>
<dbReference type="Gene3D" id="3.40.50.620">
    <property type="entry name" value="HUPs"/>
    <property type="match status" value="1"/>
</dbReference>
<dbReference type="HAMAP" id="MF_00151">
    <property type="entry name" value="PPAT_bact"/>
    <property type="match status" value="1"/>
</dbReference>
<dbReference type="InterPro" id="IPR004821">
    <property type="entry name" value="Cyt_trans-like"/>
</dbReference>
<dbReference type="InterPro" id="IPR001980">
    <property type="entry name" value="PPAT"/>
</dbReference>
<dbReference type="InterPro" id="IPR014729">
    <property type="entry name" value="Rossmann-like_a/b/a_fold"/>
</dbReference>
<dbReference type="NCBIfam" id="TIGR01510">
    <property type="entry name" value="coaD_prev_kdtB"/>
    <property type="match status" value="1"/>
</dbReference>
<dbReference type="NCBIfam" id="TIGR00125">
    <property type="entry name" value="cyt_tran_rel"/>
    <property type="match status" value="1"/>
</dbReference>
<dbReference type="PANTHER" id="PTHR21342">
    <property type="entry name" value="PHOSPHOPANTETHEINE ADENYLYLTRANSFERASE"/>
    <property type="match status" value="1"/>
</dbReference>
<dbReference type="PANTHER" id="PTHR21342:SF1">
    <property type="entry name" value="PHOSPHOPANTETHEINE ADENYLYLTRANSFERASE"/>
    <property type="match status" value="1"/>
</dbReference>
<dbReference type="Pfam" id="PF01467">
    <property type="entry name" value="CTP_transf_like"/>
    <property type="match status" value="1"/>
</dbReference>
<dbReference type="PRINTS" id="PR01020">
    <property type="entry name" value="LPSBIOSNTHSS"/>
</dbReference>
<dbReference type="SUPFAM" id="SSF52374">
    <property type="entry name" value="Nucleotidylyl transferase"/>
    <property type="match status" value="1"/>
</dbReference>
<keyword id="KW-0067">ATP-binding</keyword>
<keyword id="KW-0173">Coenzyme A biosynthesis</keyword>
<keyword id="KW-0963">Cytoplasm</keyword>
<keyword id="KW-0460">Magnesium</keyword>
<keyword id="KW-0547">Nucleotide-binding</keyword>
<keyword id="KW-0548">Nucleotidyltransferase</keyword>
<keyword id="KW-1185">Reference proteome</keyword>
<keyword id="KW-0808">Transferase</keyword>
<gene>
    <name evidence="1" type="primary">coaD</name>
    <name type="ordered locus">ECS88_4048</name>
</gene>
<feature type="chain" id="PRO_1000118076" description="Phosphopantetheine adenylyltransferase">
    <location>
        <begin position="1"/>
        <end position="159"/>
    </location>
</feature>
<feature type="binding site" evidence="1">
    <location>
        <begin position="10"/>
        <end position="11"/>
    </location>
    <ligand>
        <name>ATP</name>
        <dbReference type="ChEBI" id="CHEBI:30616"/>
    </ligand>
</feature>
<feature type="binding site" evidence="1">
    <location>
        <position position="10"/>
    </location>
    <ligand>
        <name>substrate</name>
    </ligand>
</feature>
<feature type="binding site" evidence="1">
    <location>
        <position position="18"/>
    </location>
    <ligand>
        <name>ATP</name>
        <dbReference type="ChEBI" id="CHEBI:30616"/>
    </ligand>
</feature>
<feature type="binding site" evidence="1">
    <location>
        <position position="42"/>
    </location>
    <ligand>
        <name>substrate</name>
    </ligand>
</feature>
<feature type="binding site" evidence="1">
    <location>
        <position position="74"/>
    </location>
    <ligand>
        <name>substrate</name>
    </ligand>
</feature>
<feature type="binding site" evidence="1">
    <location>
        <position position="88"/>
    </location>
    <ligand>
        <name>substrate</name>
    </ligand>
</feature>
<feature type="binding site" evidence="1">
    <location>
        <begin position="89"/>
        <end position="91"/>
    </location>
    <ligand>
        <name>ATP</name>
        <dbReference type="ChEBI" id="CHEBI:30616"/>
    </ligand>
</feature>
<feature type="binding site" evidence="1">
    <location>
        <position position="99"/>
    </location>
    <ligand>
        <name>ATP</name>
        <dbReference type="ChEBI" id="CHEBI:30616"/>
    </ligand>
</feature>
<feature type="binding site" evidence="1">
    <location>
        <begin position="124"/>
        <end position="130"/>
    </location>
    <ligand>
        <name>ATP</name>
        <dbReference type="ChEBI" id="CHEBI:30616"/>
    </ligand>
</feature>
<feature type="site" description="Transition state stabilizer" evidence="1">
    <location>
        <position position="18"/>
    </location>
</feature>
<reference key="1">
    <citation type="journal article" date="2009" name="PLoS Genet.">
        <title>Organised genome dynamics in the Escherichia coli species results in highly diverse adaptive paths.</title>
        <authorList>
            <person name="Touchon M."/>
            <person name="Hoede C."/>
            <person name="Tenaillon O."/>
            <person name="Barbe V."/>
            <person name="Baeriswyl S."/>
            <person name="Bidet P."/>
            <person name="Bingen E."/>
            <person name="Bonacorsi S."/>
            <person name="Bouchier C."/>
            <person name="Bouvet O."/>
            <person name="Calteau A."/>
            <person name="Chiapello H."/>
            <person name="Clermont O."/>
            <person name="Cruveiller S."/>
            <person name="Danchin A."/>
            <person name="Diard M."/>
            <person name="Dossat C."/>
            <person name="Karoui M.E."/>
            <person name="Frapy E."/>
            <person name="Garry L."/>
            <person name="Ghigo J.M."/>
            <person name="Gilles A.M."/>
            <person name="Johnson J."/>
            <person name="Le Bouguenec C."/>
            <person name="Lescat M."/>
            <person name="Mangenot S."/>
            <person name="Martinez-Jehanne V."/>
            <person name="Matic I."/>
            <person name="Nassif X."/>
            <person name="Oztas S."/>
            <person name="Petit M.A."/>
            <person name="Pichon C."/>
            <person name="Rouy Z."/>
            <person name="Ruf C.S."/>
            <person name="Schneider D."/>
            <person name="Tourret J."/>
            <person name="Vacherie B."/>
            <person name="Vallenet D."/>
            <person name="Medigue C."/>
            <person name="Rocha E.P.C."/>
            <person name="Denamur E."/>
        </authorList>
    </citation>
    <scope>NUCLEOTIDE SEQUENCE [LARGE SCALE GENOMIC DNA]</scope>
    <source>
        <strain>S88 / ExPEC</strain>
    </source>
</reference>
<comment type="function">
    <text evidence="1">Reversibly transfers an adenylyl group from ATP to 4'-phosphopantetheine, yielding dephospho-CoA (dPCoA) and pyrophosphate.</text>
</comment>
<comment type="catalytic activity">
    <reaction evidence="1">
        <text>(R)-4'-phosphopantetheine + ATP + H(+) = 3'-dephospho-CoA + diphosphate</text>
        <dbReference type="Rhea" id="RHEA:19801"/>
        <dbReference type="ChEBI" id="CHEBI:15378"/>
        <dbReference type="ChEBI" id="CHEBI:30616"/>
        <dbReference type="ChEBI" id="CHEBI:33019"/>
        <dbReference type="ChEBI" id="CHEBI:57328"/>
        <dbReference type="ChEBI" id="CHEBI:61723"/>
        <dbReference type="EC" id="2.7.7.3"/>
    </reaction>
</comment>
<comment type="cofactor">
    <cofactor evidence="1">
        <name>Mg(2+)</name>
        <dbReference type="ChEBI" id="CHEBI:18420"/>
    </cofactor>
</comment>
<comment type="pathway">
    <text evidence="1">Cofactor biosynthesis; coenzyme A biosynthesis; CoA from (R)-pantothenate: step 4/5.</text>
</comment>
<comment type="subunit">
    <text evidence="1">Homohexamer.</text>
</comment>
<comment type="subcellular location">
    <subcellularLocation>
        <location evidence="1">Cytoplasm</location>
    </subcellularLocation>
</comment>
<comment type="similarity">
    <text evidence="1">Belongs to the bacterial CoaD family.</text>
</comment>
<accession>B7MFJ5</accession>
<organism>
    <name type="scientific">Escherichia coli O45:K1 (strain S88 / ExPEC)</name>
    <dbReference type="NCBI Taxonomy" id="585035"/>
    <lineage>
        <taxon>Bacteria</taxon>
        <taxon>Pseudomonadati</taxon>
        <taxon>Pseudomonadota</taxon>
        <taxon>Gammaproteobacteria</taxon>
        <taxon>Enterobacterales</taxon>
        <taxon>Enterobacteriaceae</taxon>
        <taxon>Escherichia</taxon>
    </lineage>
</organism>
<name>COAD_ECO45</name>